<organism>
    <name type="scientific">Arabidopsis thaliana</name>
    <name type="common">Mouse-ear cress</name>
    <dbReference type="NCBI Taxonomy" id="3702"/>
    <lineage>
        <taxon>Eukaryota</taxon>
        <taxon>Viridiplantae</taxon>
        <taxon>Streptophyta</taxon>
        <taxon>Embryophyta</taxon>
        <taxon>Tracheophyta</taxon>
        <taxon>Spermatophyta</taxon>
        <taxon>Magnoliopsida</taxon>
        <taxon>eudicotyledons</taxon>
        <taxon>Gunneridae</taxon>
        <taxon>Pentapetalae</taxon>
        <taxon>rosids</taxon>
        <taxon>malvids</taxon>
        <taxon>Brassicales</taxon>
        <taxon>Brassicaceae</taxon>
        <taxon>Camelineae</taxon>
        <taxon>Arabidopsis</taxon>
    </lineage>
</organism>
<comment type="function">
    <text evidence="1">Binds to the 60S ribosomal subunit and prevents its association with the 40S ribosomal subunit to form the 80S initiation complex in the cytoplasm. May also be involved in ribosome biogenesis.</text>
</comment>
<comment type="subunit">
    <text evidence="1">Monomer. Associates with the 60S ribosomal subunit.</text>
</comment>
<comment type="subcellular location">
    <subcellularLocation>
        <location evidence="1">Cytoplasm</location>
    </subcellularLocation>
    <subcellularLocation>
        <location evidence="1">Nucleus</location>
        <location evidence="1">Nucleolus</location>
    </subcellularLocation>
    <text evidence="1">Shuttles between cytoplasm and nucleus/nucleolus.</text>
</comment>
<comment type="induction">
    <text evidence="2">Expressed at very low levels only.</text>
</comment>
<comment type="similarity">
    <text evidence="1">Belongs to the eIF-6 family.</text>
</comment>
<evidence type="ECO:0000255" key="1">
    <source>
        <dbReference type="HAMAP-Rule" id="MF_03132"/>
    </source>
</evidence>
<evidence type="ECO:0000269" key="2">
    <source>
    </source>
</evidence>
<name>IF62_ARATH</name>
<protein>
    <recommendedName>
        <fullName evidence="1">Eukaryotic translation initiation factor 6-2</fullName>
        <shortName>AteIF-6;2</shortName>
    </recommendedName>
</protein>
<reference key="1">
    <citation type="journal article" date="2000" name="Nature">
        <title>Sequence and analysis of chromosome 3 of the plant Arabidopsis thaliana.</title>
        <authorList>
            <person name="Salanoubat M."/>
            <person name="Lemcke K."/>
            <person name="Rieger M."/>
            <person name="Ansorge W."/>
            <person name="Unseld M."/>
            <person name="Fartmann B."/>
            <person name="Valle G."/>
            <person name="Bloecker H."/>
            <person name="Perez-Alonso M."/>
            <person name="Obermaier B."/>
            <person name="Delseny M."/>
            <person name="Boutry M."/>
            <person name="Grivell L.A."/>
            <person name="Mache R."/>
            <person name="Puigdomenech P."/>
            <person name="De Simone V."/>
            <person name="Choisne N."/>
            <person name="Artiguenave F."/>
            <person name="Robert C."/>
            <person name="Brottier P."/>
            <person name="Wincker P."/>
            <person name="Cattolico L."/>
            <person name="Weissenbach J."/>
            <person name="Saurin W."/>
            <person name="Quetier F."/>
            <person name="Schaefer M."/>
            <person name="Mueller-Auer S."/>
            <person name="Gabel C."/>
            <person name="Fuchs M."/>
            <person name="Benes V."/>
            <person name="Wurmbach E."/>
            <person name="Drzonek H."/>
            <person name="Erfle H."/>
            <person name="Jordan N."/>
            <person name="Bangert S."/>
            <person name="Wiedelmann R."/>
            <person name="Kranz H."/>
            <person name="Voss H."/>
            <person name="Holland R."/>
            <person name="Brandt P."/>
            <person name="Nyakatura G."/>
            <person name="Vezzi A."/>
            <person name="D'Angelo M."/>
            <person name="Pallavicini A."/>
            <person name="Toppo S."/>
            <person name="Simionati B."/>
            <person name="Conrad A."/>
            <person name="Hornischer K."/>
            <person name="Kauer G."/>
            <person name="Loehnert T.-H."/>
            <person name="Nordsiek G."/>
            <person name="Reichelt J."/>
            <person name="Scharfe M."/>
            <person name="Schoen O."/>
            <person name="Bargues M."/>
            <person name="Terol J."/>
            <person name="Climent J."/>
            <person name="Navarro P."/>
            <person name="Collado C."/>
            <person name="Perez-Perez A."/>
            <person name="Ottenwaelder B."/>
            <person name="Duchemin D."/>
            <person name="Cooke R."/>
            <person name="Laudie M."/>
            <person name="Berger-Llauro C."/>
            <person name="Purnelle B."/>
            <person name="Masuy D."/>
            <person name="de Haan M."/>
            <person name="Maarse A.C."/>
            <person name="Alcaraz J.-P."/>
            <person name="Cottet A."/>
            <person name="Casacuberta E."/>
            <person name="Monfort A."/>
            <person name="Argiriou A."/>
            <person name="Flores M."/>
            <person name="Liguori R."/>
            <person name="Vitale D."/>
            <person name="Mannhaupt G."/>
            <person name="Haase D."/>
            <person name="Schoof H."/>
            <person name="Rudd S."/>
            <person name="Zaccaria P."/>
            <person name="Mewes H.-W."/>
            <person name="Mayer K.F.X."/>
            <person name="Kaul S."/>
            <person name="Town C.D."/>
            <person name="Koo H.L."/>
            <person name="Tallon L.J."/>
            <person name="Jenkins J."/>
            <person name="Rooney T."/>
            <person name="Rizzo M."/>
            <person name="Walts A."/>
            <person name="Utterback T."/>
            <person name="Fujii C.Y."/>
            <person name="Shea T.P."/>
            <person name="Creasy T.H."/>
            <person name="Haas B."/>
            <person name="Maiti R."/>
            <person name="Wu D."/>
            <person name="Peterson J."/>
            <person name="Van Aken S."/>
            <person name="Pai G."/>
            <person name="Militscher J."/>
            <person name="Sellers P."/>
            <person name="Gill J.E."/>
            <person name="Feldblyum T.V."/>
            <person name="Preuss D."/>
            <person name="Lin X."/>
            <person name="Nierman W.C."/>
            <person name="Salzberg S.L."/>
            <person name="White O."/>
            <person name="Venter J.C."/>
            <person name="Fraser C.M."/>
            <person name="Kaneko T."/>
            <person name="Nakamura Y."/>
            <person name="Sato S."/>
            <person name="Kato T."/>
            <person name="Asamizu E."/>
            <person name="Sasamoto S."/>
            <person name="Kimura T."/>
            <person name="Idesawa K."/>
            <person name="Kawashima K."/>
            <person name="Kishida Y."/>
            <person name="Kiyokawa C."/>
            <person name="Kohara M."/>
            <person name="Matsumoto M."/>
            <person name="Matsuno A."/>
            <person name="Muraki A."/>
            <person name="Nakayama S."/>
            <person name="Nakazaki N."/>
            <person name="Shinpo S."/>
            <person name="Takeuchi C."/>
            <person name="Wada T."/>
            <person name="Watanabe A."/>
            <person name="Yamada M."/>
            <person name="Yasuda M."/>
            <person name="Tabata S."/>
        </authorList>
    </citation>
    <scope>NUCLEOTIDE SEQUENCE [LARGE SCALE GENOMIC DNA]</scope>
    <source>
        <strain>cv. Columbia</strain>
    </source>
</reference>
<reference key="2">
    <citation type="journal article" date="2017" name="Plant J.">
        <title>Araport11: a complete reannotation of the Arabidopsis thaliana reference genome.</title>
        <authorList>
            <person name="Cheng C.Y."/>
            <person name="Krishnakumar V."/>
            <person name="Chan A.P."/>
            <person name="Thibaud-Nissen F."/>
            <person name="Schobel S."/>
            <person name="Town C.D."/>
        </authorList>
    </citation>
    <scope>GENOME REANNOTATION</scope>
    <source>
        <strain>cv. Columbia</strain>
    </source>
</reference>
<reference key="3">
    <citation type="journal article" date="2003" name="Science">
        <title>Empirical analysis of transcriptional activity in the Arabidopsis genome.</title>
        <authorList>
            <person name="Yamada K."/>
            <person name="Lim J."/>
            <person name="Dale J.M."/>
            <person name="Chen H."/>
            <person name="Shinn P."/>
            <person name="Palm C.J."/>
            <person name="Southwick A.M."/>
            <person name="Wu H.C."/>
            <person name="Kim C.J."/>
            <person name="Nguyen M."/>
            <person name="Pham P.K."/>
            <person name="Cheuk R.F."/>
            <person name="Karlin-Newmann G."/>
            <person name="Liu S.X."/>
            <person name="Lam B."/>
            <person name="Sakano H."/>
            <person name="Wu T."/>
            <person name="Yu G."/>
            <person name="Miranda M."/>
            <person name="Quach H.L."/>
            <person name="Tripp M."/>
            <person name="Chang C.H."/>
            <person name="Lee J.M."/>
            <person name="Toriumi M.J."/>
            <person name="Chan M.M."/>
            <person name="Tang C.C."/>
            <person name="Onodera C.S."/>
            <person name="Deng J.M."/>
            <person name="Akiyama K."/>
            <person name="Ansari Y."/>
            <person name="Arakawa T."/>
            <person name="Banh J."/>
            <person name="Banno F."/>
            <person name="Bowser L."/>
            <person name="Brooks S.Y."/>
            <person name="Carninci P."/>
            <person name="Chao Q."/>
            <person name="Choy N."/>
            <person name="Enju A."/>
            <person name="Goldsmith A.D."/>
            <person name="Gurjal M."/>
            <person name="Hansen N.F."/>
            <person name="Hayashizaki Y."/>
            <person name="Johnson-Hopson C."/>
            <person name="Hsuan V.W."/>
            <person name="Iida K."/>
            <person name="Karnes M."/>
            <person name="Khan S."/>
            <person name="Koesema E."/>
            <person name="Ishida J."/>
            <person name="Jiang P.X."/>
            <person name="Jones T."/>
            <person name="Kawai J."/>
            <person name="Kamiya A."/>
            <person name="Meyers C."/>
            <person name="Nakajima M."/>
            <person name="Narusaka M."/>
            <person name="Seki M."/>
            <person name="Sakurai T."/>
            <person name="Satou M."/>
            <person name="Tamse R."/>
            <person name="Vaysberg M."/>
            <person name="Wallender E.K."/>
            <person name="Wong C."/>
            <person name="Yamamura Y."/>
            <person name="Yuan S."/>
            <person name="Shinozaki K."/>
            <person name="Davis R.W."/>
            <person name="Theologis A."/>
            <person name="Ecker J.R."/>
        </authorList>
    </citation>
    <scope>NUCLEOTIDE SEQUENCE [LARGE SCALE MRNA]</scope>
    <source>
        <strain>cv. Columbia</strain>
    </source>
</reference>
<reference key="4">
    <citation type="journal article" date="2010" name="Biochem. Biophys. Res. Commun.">
        <title>Characterization of plant eukaryotic translation initiation factor 6 (eIF6) genes: The essential role in embryogenesis and their differential expression in Arabidopsis and rice.</title>
        <authorList>
            <person name="Kato Y."/>
            <person name="Konishi M."/>
            <person name="Shigyo M."/>
            <person name="Yoneyama T."/>
            <person name="Yanagisawa S."/>
        </authorList>
    </citation>
    <scope>INDUCTION</scope>
</reference>
<keyword id="KW-0963">Cytoplasm</keyword>
<keyword id="KW-0396">Initiation factor</keyword>
<keyword id="KW-0539">Nucleus</keyword>
<keyword id="KW-0648">Protein biosynthesis</keyword>
<keyword id="KW-1185">Reference proteome</keyword>
<keyword id="KW-0690">Ribosome biogenesis</keyword>
<accession>Q9M060</accession>
<dbReference type="EMBL" id="AY128351">
    <property type="protein sequence ID" value="AAM91554.1"/>
    <property type="molecule type" value="mRNA"/>
</dbReference>
<dbReference type="EMBL" id="BT009656">
    <property type="protein sequence ID" value="AAP75806.1"/>
    <property type="molecule type" value="mRNA"/>
</dbReference>
<dbReference type="EMBL" id="AL161667">
    <property type="protein sequence ID" value="CAB81587.1"/>
    <property type="molecule type" value="Genomic_DNA"/>
</dbReference>
<dbReference type="EMBL" id="CP002686">
    <property type="protein sequence ID" value="AEE79410.1"/>
    <property type="molecule type" value="Genomic_DNA"/>
</dbReference>
<dbReference type="PIR" id="T47701">
    <property type="entry name" value="T47701"/>
</dbReference>
<dbReference type="RefSeq" id="NP_191121.1">
    <property type="nucleotide sequence ID" value="NM_115420.4"/>
</dbReference>
<dbReference type="SMR" id="Q9M060"/>
<dbReference type="BioGRID" id="10044">
    <property type="interactions" value="2"/>
</dbReference>
<dbReference type="FunCoup" id="Q9M060">
    <property type="interactions" value="3901"/>
</dbReference>
<dbReference type="STRING" id="3702.Q9M060"/>
<dbReference type="iPTMnet" id="Q9M060"/>
<dbReference type="PaxDb" id="3702-AT3G55620.1"/>
<dbReference type="ProteomicsDB" id="232211"/>
<dbReference type="EnsemblPlants" id="AT3G55620.1">
    <property type="protein sequence ID" value="AT3G55620.1"/>
    <property type="gene ID" value="AT3G55620"/>
</dbReference>
<dbReference type="GeneID" id="824728"/>
<dbReference type="Gramene" id="AT3G55620.1">
    <property type="protein sequence ID" value="AT3G55620.1"/>
    <property type="gene ID" value="AT3G55620"/>
</dbReference>
<dbReference type="KEGG" id="ath:AT3G55620"/>
<dbReference type="Araport" id="AT3G55620"/>
<dbReference type="TAIR" id="AT3G55620">
    <property type="gene designation" value="EIF6A"/>
</dbReference>
<dbReference type="eggNOG" id="KOG3185">
    <property type="taxonomic scope" value="Eukaryota"/>
</dbReference>
<dbReference type="HOGENOM" id="CLU_071894_0_0_1"/>
<dbReference type="InParanoid" id="Q9M060"/>
<dbReference type="OMA" id="WCAFCGM"/>
<dbReference type="OrthoDB" id="1032083at2759"/>
<dbReference type="PhylomeDB" id="Q9M060"/>
<dbReference type="CD-CODE" id="4299E36E">
    <property type="entry name" value="Nucleolus"/>
</dbReference>
<dbReference type="PRO" id="PR:Q9M060"/>
<dbReference type="Proteomes" id="UP000006548">
    <property type="component" value="Chromosome 3"/>
</dbReference>
<dbReference type="ExpressionAtlas" id="Q9M060">
    <property type="expression patterns" value="baseline and differential"/>
</dbReference>
<dbReference type="GO" id="GO:0005829">
    <property type="term" value="C:cytosol"/>
    <property type="evidence" value="ECO:0000314"/>
    <property type="project" value="TAIR"/>
</dbReference>
<dbReference type="GO" id="GO:0005730">
    <property type="term" value="C:nucleolus"/>
    <property type="evidence" value="ECO:0007005"/>
    <property type="project" value="TAIR"/>
</dbReference>
<dbReference type="GO" id="GO:0005634">
    <property type="term" value="C:nucleus"/>
    <property type="evidence" value="ECO:0000314"/>
    <property type="project" value="TAIR"/>
</dbReference>
<dbReference type="GO" id="GO:0043023">
    <property type="term" value="F:ribosomal large subunit binding"/>
    <property type="evidence" value="ECO:0007669"/>
    <property type="project" value="UniProtKB-UniRule"/>
</dbReference>
<dbReference type="GO" id="GO:0003743">
    <property type="term" value="F:translation initiation factor activity"/>
    <property type="evidence" value="ECO:0007669"/>
    <property type="project" value="UniProtKB-UniRule"/>
</dbReference>
<dbReference type="GO" id="GO:0071215">
    <property type="term" value="P:cellular response to abscisic acid stimulus"/>
    <property type="evidence" value="ECO:0000270"/>
    <property type="project" value="TAIR"/>
</dbReference>
<dbReference type="GO" id="GO:0042256">
    <property type="term" value="P:cytosolic ribosome assembly"/>
    <property type="evidence" value="ECO:0007669"/>
    <property type="project" value="UniProtKB-UniRule"/>
</dbReference>
<dbReference type="GO" id="GO:0009793">
    <property type="term" value="P:embryo development ending in seed dormancy"/>
    <property type="evidence" value="ECO:0000315"/>
    <property type="project" value="TAIR"/>
</dbReference>
<dbReference type="GO" id="GO:0042273">
    <property type="term" value="P:ribosomal large subunit biogenesis"/>
    <property type="evidence" value="ECO:0007669"/>
    <property type="project" value="UniProtKB-UniRule"/>
</dbReference>
<dbReference type="CDD" id="cd00527">
    <property type="entry name" value="IF6"/>
    <property type="match status" value="1"/>
</dbReference>
<dbReference type="FunFam" id="3.75.10.10:FF:000001">
    <property type="entry name" value="Eukaryotic translation initiation factor 6"/>
    <property type="match status" value="1"/>
</dbReference>
<dbReference type="Gene3D" id="3.75.10.10">
    <property type="entry name" value="L-arginine/glycine Amidinotransferase, Chain A"/>
    <property type="match status" value="1"/>
</dbReference>
<dbReference type="HAMAP" id="MF_00032">
    <property type="entry name" value="eIF_6"/>
    <property type="match status" value="1"/>
</dbReference>
<dbReference type="InterPro" id="IPR002769">
    <property type="entry name" value="eIF6"/>
</dbReference>
<dbReference type="NCBIfam" id="TIGR00323">
    <property type="entry name" value="eIF-6"/>
    <property type="match status" value="1"/>
</dbReference>
<dbReference type="PANTHER" id="PTHR10784">
    <property type="entry name" value="TRANSLATION INITIATION FACTOR 6"/>
    <property type="match status" value="1"/>
</dbReference>
<dbReference type="Pfam" id="PF01912">
    <property type="entry name" value="eIF-6"/>
    <property type="match status" value="1"/>
</dbReference>
<dbReference type="PIRSF" id="PIRSF006413">
    <property type="entry name" value="IF-6"/>
    <property type="match status" value="1"/>
</dbReference>
<dbReference type="SMART" id="SM00654">
    <property type="entry name" value="eIF6"/>
    <property type="match status" value="1"/>
</dbReference>
<dbReference type="SUPFAM" id="SSF55909">
    <property type="entry name" value="Pentein"/>
    <property type="match status" value="1"/>
</dbReference>
<gene>
    <name evidence="1" type="primary">EIF6-2</name>
    <name type="synonym">EMB1624</name>
    <name type="ordered locus">At3g55620</name>
    <name type="ORF">F1I16.30</name>
</gene>
<feature type="chain" id="PRO_0000402098" description="Eukaryotic translation initiation factor 6-2">
    <location>
        <begin position="1"/>
        <end position="245"/>
    </location>
</feature>
<proteinExistence type="evidence at transcript level"/>
<sequence length="245" mass="26482">MATRLQFENNCEVGVFSKLTNAYCLVAIGGSENFYSAFESELADVIPIVKTSIGGTRIIGRLCAGNKNGLLVPHTTTDQELQHLRNSLPDQVVVQRIDERLSALGNCIACNDYVALAHTDLDKETEEIIADVLGVEVFRQTIAGNILVGSYCALSNKGGMVHPHTSVEDLEELSTLLQVPLVAGTVNRGSEVIAAGMTVNDWTSFCGSDTTATELSVIDSIFKLREAQPSSIVDEMRKSLIDTYV</sequence>